<feature type="chain" id="PRO_0000076210" description="Autophagy-related protein 31">
    <location>
        <begin position="1"/>
        <end position="196"/>
    </location>
</feature>
<feature type="region of interest" description="Disordered" evidence="1">
    <location>
        <begin position="20"/>
        <end position="45"/>
    </location>
</feature>
<feature type="region of interest" description="Disordered" evidence="1">
    <location>
        <begin position="120"/>
        <end position="145"/>
    </location>
</feature>
<feature type="compositionally biased region" description="Polar residues" evidence="1">
    <location>
        <begin position="22"/>
        <end position="43"/>
    </location>
</feature>
<feature type="compositionally biased region" description="Polar residues" evidence="1">
    <location>
        <begin position="120"/>
        <end position="129"/>
    </location>
</feature>
<feature type="compositionally biased region" description="Acidic residues" evidence="1">
    <location>
        <begin position="135"/>
        <end position="144"/>
    </location>
</feature>
<feature type="modified residue" description="Phosphoserine" evidence="8">
    <location>
        <position position="38"/>
    </location>
</feature>
<feature type="modified residue" description="Phosphoserine" evidence="8">
    <location>
        <position position="40"/>
    </location>
</feature>
<feature type="modified residue" description="Phosphothreonine" evidence="8">
    <location>
        <position position="41"/>
    </location>
</feature>
<feature type="modified residue" description="Phosphoserine" evidence="8">
    <location>
        <position position="44"/>
    </location>
</feature>
<feature type="modified residue" description="Phosphoserine" evidence="8">
    <location>
        <position position="116"/>
    </location>
</feature>
<feature type="modified residue" description="Phosphoserine" evidence="8">
    <location>
        <position position="135"/>
    </location>
</feature>
<feature type="modified residue" description="Phosphoserine" evidence="8">
    <location>
        <position position="143"/>
    </location>
</feature>
<feature type="modified residue" description="Phosphoserine" evidence="8">
    <location>
        <position position="146"/>
    </location>
</feature>
<feature type="modified residue" description="Phosphoserine" evidence="8">
    <location>
        <position position="153"/>
    </location>
</feature>
<feature type="modified residue" description="Phosphoserine" evidence="8">
    <location>
        <position position="174"/>
    </location>
</feature>
<feature type="modified residue" description="Phosphoserine" evidence="8">
    <location>
        <position position="195"/>
    </location>
</feature>
<feature type="mutagenesis site" description="Decreases the percentage of cells having vacuolar ATG8, impairs ATG9 recycling between the PAS and the cytoplasmic pool, and reduces autophagy by about 60%." evidence="8">
    <original>S</original>
    <variation>A</variation>
    <location>
        <position position="174"/>
    </location>
</feature>
<feature type="mutagenesis site" description="Phosphomimetic mutant that rescues autophagy." evidence="8">
    <original>S</original>
    <variation>D</variation>
    <location>
        <position position="174"/>
    </location>
</feature>
<proteinExistence type="evidence at protein level"/>
<comment type="function">
    <text evidence="3 4 6 7 8 9">Plays a role in starvation-induced autophagy (PubMed:17362880, PubMed:18287526, PubMed:19755117, PubMed:25773276). Involved in mitophagy (PubMed:19793921). Functions with ATG17 and ATG29 at the preautophagosomal structure (PAS) in order to form normal autophagosomes under starvation conditions (PubMed:17362880, PubMed:18287526, PubMed:25773276). May be involved in microtubule function, such as chromosome segregation and karyogamy (PubMed:9348527).</text>
</comment>
<comment type="subunit">
    <text evidence="3 4 5 6">Forms a stable complex with ATG17 and ATG29. Interacts directly with ATG29. The ATG17-ATG29-ATG31 complex interacts with the ATG1-ATG13 complex. Note=The interaction with the ATG1-ATG13 complex is induced by starvation.</text>
</comment>
<comment type="interaction">
    <interactant intactId="EBI-34768">
        <id>Q12421</id>
    </interactant>
    <interactant intactId="EBI-30856">
        <id>Q06410</id>
        <label>ATG17</label>
    </interactant>
    <organismsDiffer>false</organismsDiffer>
    <experiments>3</experiments>
</comment>
<comment type="interaction">
    <interactant intactId="EBI-34768">
        <id>Q12421</id>
    </interactant>
    <interactant intactId="EBI-11435">
        <id>P28737</id>
        <label>MSP1</label>
    </interactant>
    <organismsDiffer>false</organismsDiffer>
    <experiments>3</experiments>
</comment>
<comment type="subcellular location">
    <subcellularLocation>
        <location evidence="10">Cytoplasm</location>
        <location evidence="10">Cytoskeleton</location>
    </subcellularLocation>
    <subcellularLocation>
        <location>Preautophagosomal structure</location>
    </subcellularLocation>
</comment>
<comment type="PTM">
    <text evidence="6 8">Highly phosphorylated (PubMed:19755117, PubMed:25773276). Ser-174 is phosphorylated constitutively (PubMed:25773276). Phosphorylation at Ser-174 is required for autophagy induced by various autophagy stimuli such as nitrogen starvation and rapamycin treatment (PubMed:25773276).</text>
</comment>
<comment type="disruption phenotype">
    <text evidence="8">Decreases the percentage of cells having vacuolar ATG8, impairs ATG9 recycling between the PAS and the cytoplasmic pool, and reduces autophagy by about 60%.</text>
</comment>
<comment type="miscellaneous">
    <text evidence="2">Present with 486 molecules/cell in log phase SD medium.</text>
</comment>
<evidence type="ECO:0000256" key="1">
    <source>
        <dbReference type="SAM" id="MobiDB-lite"/>
    </source>
</evidence>
<evidence type="ECO:0000269" key="2">
    <source>
    </source>
</evidence>
<evidence type="ECO:0000269" key="3">
    <source>
    </source>
</evidence>
<evidence type="ECO:0000269" key="4">
    <source>
    </source>
</evidence>
<evidence type="ECO:0000269" key="5">
    <source>
    </source>
</evidence>
<evidence type="ECO:0000269" key="6">
    <source>
    </source>
</evidence>
<evidence type="ECO:0000269" key="7">
    <source>
    </source>
</evidence>
<evidence type="ECO:0000269" key="8">
    <source>
    </source>
</evidence>
<evidence type="ECO:0000269" key="9">
    <source>
    </source>
</evidence>
<evidence type="ECO:0000305" key="10"/>
<name>ATG31_YEAST</name>
<reference key="1">
    <citation type="journal article" date="1996" name="Yeast">
        <title>Sequencing and analysis of a 35.4 kb region on the right arm of chromosome IV from Saccharomyces cerevisiae reveal 23 open reading frames.</title>
        <authorList>
            <person name="Eide L.G."/>
            <person name="Sander C."/>
            <person name="Prydz H."/>
        </authorList>
    </citation>
    <scope>NUCLEOTIDE SEQUENCE [GENOMIC DNA]</scope>
</reference>
<reference key="2">
    <citation type="journal article" date="1997" name="Nature">
        <title>The nucleotide sequence of Saccharomyces cerevisiae chromosome IV.</title>
        <authorList>
            <person name="Jacq C."/>
            <person name="Alt-Moerbe J."/>
            <person name="Andre B."/>
            <person name="Arnold W."/>
            <person name="Bahr A."/>
            <person name="Ballesta J.P.G."/>
            <person name="Bargues M."/>
            <person name="Baron L."/>
            <person name="Becker A."/>
            <person name="Biteau N."/>
            <person name="Bloecker H."/>
            <person name="Blugeon C."/>
            <person name="Boskovic J."/>
            <person name="Brandt P."/>
            <person name="Brueckner M."/>
            <person name="Buitrago M.J."/>
            <person name="Coster F."/>
            <person name="Delaveau T."/>
            <person name="del Rey F."/>
            <person name="Dujon B."/>
            <person name="Eide L.G."/>
            <person name="Garcia-Cantalejo J.M."/>
            <person name="Goffeau A."/>
            <person name="Gomez-Peris A."/>
            <person name="Granotier C."/>
            <person name="Hanemann V."/>
            <person name="Hankeln T."/>
            <person name="Hoheisel J.D."/>
            <person name="Jaeger W."/>
            <person name="Jimenez A."/>
            <person name="Jonniaux J.-L."/>
            <person name="Kraemer C."/>
            <person name="Kuester H."/>
            <person name="Laamanen P."/>
            <person name="Legros Y."/>
            <person name="Louis E.J."/>
            <person name="Moeller-Rieker S."/>
            <person name="Monnet A."/>
            <person name="Moro M."/>
            <person name="Mueller-Auer S."/>
            <person name="Nussbaumer B."/>
            <person name="Paricio N."/>
            <person name="Paulin L."/>
            <person name="Perea J."/>
            <person name="Perez-Alonso M."/>
            <person name="Perez-Ortin J.E."/>
            <person name="Pohl T.M."/>
            <person name="Prydz H."/>
            <person name="Purnelle B."/>
            <person name="Rasmussen S.W."/>
            <person name="Remacha M.A."/>
            <person name="Revuelta J.L."/>
            <person name="Rieger M."/>
            <person name="Salom D."/>
            <person name="Saluz H.P."/>
            <person name="Saiz J.E."/>
            <person name="Saren A.-M."/>
            <person name="Schaefer M."/>
            <person name="Scharfe M."/>
            <person name="Schmidt E.R."/>
            <person name="Schneider C."/>
            <person name="Scholler P."/>
            <person name="Schwarz S."/>
            <person name="Soler-Mira A."/>
            <person name="Urrestarazu L.A."/>
            <person name="Verhasselt P."/>
            <person name="Vissers S."/>
            <person name="Voet M."/>
            <person name="Volckaert G."/>
            <person name="Wagner G."/>
            <person name="Wambutt R."/>
            <person name="Wedler E."/>
            <person name="Wedler H."/>
            <person name="Woelfl S."/>
            <person name="Harris D.E."/>
            <person name="Bowman S."/>
            <person name="Brown D."/>
            <person name="Churcher C.M."/>
            <person name="Connor R."/>
            <person name="Dedman K."/>
            <person name="Gentles S."/>
            <person name="Hamlin N."/>
            <person name="Hunt S."/>
            <person name="Jones L."/>
            <person name="McDonald S."/>
            <person name="Murphy L.D."/>
            <person name="Niblett D."/>
            <person name="Odell C."/>
            <person name="Oliver K."/>
            <person name="Rajandream M.A."/>
            <person name="Richards C."/>
            <person name="Shore L."/>
            <person name="Walsh S.V."/>
            <person name="Barrell B.G."/>
            <person name="Dietrich F.S."/>
            <person name="Mulligan J.T."/>
            <person name="Allen E."/>
            <person name="Araujo R."/>
            <person name="Aviles E."/>
            <person name="Berno A."/>
            <person name="Carpenter J."/>
            <person name="Chen E."/>
            <person name="Cherry J.M."/>
            <person name="Chung E."/>
            <person name="Duncan M."/>
            <person name="Hunicke-Smith S."/>
            <person name="Hyman R.W."/>
            <person name="Komp C."/>
            <person name="Lashkari D."/>
            <person name="Lew H."/>
            <person name="Lin D."/>
            <person name="Mosedale D."/>
            <person name="Nakahara K."/>
            <person name="Namath A."/>
            <person name="Oefner P."/>
            <person name="Oh C."/>
            <person name="Petel F.X."/>
            <person name="Roberts D."/>
            <person name="Schramm S."/>
            <person name="Schroeder M."/>
            <person name="Shogren T."/>
            <person name="Shroff N."/>
            <person name="Winant A."/>
            <person name="Yelton M.A."/>
            <person name="Botstein D."/>
            <person name="Davis R.W."/>
            <person name="Johnston M."/>
            <person name="Andrews S."/>
            <person name="Brinkman R."/>
            <person name="Cooper J."/>
            <person name="Ding H."/>
            <person name="Du Z."/>
            <person name="Favello A."/>
            <person name="Fulton L."/>
            <person name="Gattung S."/>
            <person name="Greco T."/>
            <person name="Hallsworth K."/>
            <person name="Hawkins J."/>
            <person name="Hillier L.W."/>
            <person name="Jier M."/>
            <person name="Johnson D."/>
            <person name="Johnston L."/>
            <person name="Kirsten J."/>
            <person name="Kucaba T."/>
            <person name="Langston Y."/>
            <person name="Latreille P."/>
            <person name="Le T."/>
            <person name="Mardis E."/>
            <person name="Menezes S."/>
            <person name="Miller N."/>
            <person name="Nhan M."/>
            <person name="Pauley A."/>
            <person name="Peluso D."/>
            <person name="Rifkin L."/>
            <person name="Riles L."/>
            <person name="Taich A."/>
            <person name="Trevaskis E."/>
            <person name="Vignati D."/>
            <person name="Wilcox L."/>
            <person name="Wohldman P."/>
            <person name="Vaudin M."/>
            <person name="Wilson R."/>
            <person name="Waterston R."/>
            <person name="Albermann K."/>
            <person name="Hani J."/>
            <person name="Heumann K."/>
            <person name="Kleine K."/>
            <person name="Mewes H.-W."/>
            <person name="Zollner A."/>
            <person name="Zaccaria P."/>
        </authorList>
    </citation>
    <scope>NUCLEOTIDE SEQUENCE [LARGE SCALE GENOMIC DNA]</scope>
    <source>
        <strain>ATCC 204508 / S288c</strain>
    </source>
</reference>
<reference key="3">
    <citation type="journal article" date="2014" name="G3 (Bethesda)">
        <title>The reference genome sequence of Saccharomyces cerevisiae: Then and now.</title>
        <authorList>
            <person name="Engel S.R."/>
            <person name="Dietrich F.S."/>
            <person name="Fisk D.G."/>
            <person name="Binkley G."/>
            <person name="Balakrishnan R."/>
            <person name="Costanzo M.C."/>
            <person name="Dwight S.S."/>
            <person name="Hitz B.C."/>
            <person name="Karra K."/>
            <person name="Nash R.S."/>
            <person name="Weng S."/>
            <person name="Wong E.D."/>
            <person name="Lloyd P."/>
            <person name="Skrzypek M.S."/>
            <person name="Miyasato S.R."/>
            <person name="Simison M."/>
            <person name="Cherry J.M."/>
        </authorList>
    </citation>
    <scope>GENOME REANNOTATION</scope>
    <source>
        <strain>ATCC 204508 / S288c</strain>
    </source>
</reference>
<reference key="4">
    <citation type="journal article" date="2007" name="Genome Res.">
        <title>Approaching a complete repository of sequence-verified protein-encoding clones for Saccharomyces cerevisiae.</title>
        <authorList>
            <person name="Hu Y."/>
            <person name="Rolfs A."/>
            <person name="Bhullar B."/>
            <person name="Murthy T.V.S."/>
            <person name="Zhu C."/>
            <person name="Berger M.F."/>
            <person name="Camargo A.A."/>
            <person name="Kelley F."/>
            <person name="McCarron S."/>
            <person name="Jepson D."/>
            <person name="Richardson A."/>
            <person name="Raphael J."/>
            <person name="Moreira D."/>
            <person name="Taycher E."/>
            <person name="Zuo D."/>
            <person name="Mohr S."/>
            <person name="Kane M.F."/>
            <person name="Williamson J."/>
            <person name="Simpson A.J.G."/>
            <person name="Bulyk M.L."/>
            <person name="Harlow E."/>
            <person name="Marsischky G."/>
            <person name="Kolodner R.D."/>
            <person name="LaBaer J."/>
        </authorList>
    </citation>
    <scope>NUCLEOTIDE SEQUENCE [GENOMIC DNA]</scope>
    <source>
        <strain>ATCC 204508 / S288c</strain>
    </source>
</reference>
<reference key="5">
    <citation type="journal article" date="1997" name="Mol. Biol. Cell">
        <title>The Rho-GEF Rom2p localizes to sites of polarized cell growth and participates in cytoskeletal functions in Saccharomyces cerevisiae.</title>
        <authorList>
            <person name="Manning B.D."/>
            <person name="Padmanabha R."/>
            <person name="Snyder M."/>
        </authorList>
    </citation>
    <scope>FUNCTION</scope>
</reference>
<reference key="6">
    <citation type="journal article" date="2003" name="Nature">
        <title>Global analysis of protein localization in budding yeast.</title>
        <authorList>
            <person name="Huh W.-K."/>
            <person name="Falvo J.V."/>
            <person name="Gerke L.C."/>
            <person name="Carroll A.S."/>
            <person name="Howson R.W."/>
            <person name="Weissman J.S."/>
            <person name="O'Shea E.K."/>
        </authorList>
    </citation>
    <scope>SUBCELLULAR LOCATION [LARGE SCALE ANALYSIS]</scope>
</reference>
<reference key="7">
    <citation type="journal article" date="2003" name="Nature">
        <title>Global analysis of protein expression in yeast.</title>
        <authorList>
            <person name="Ghaemmaghami S."/>
            <person name="Huh W.-K."/>
            <person name="Bower K."/>
            <person name="Howson R.W."/>
            <person name="Belle A."/>
            <person name="Dephoure N."/>
            <person name="O'Shea E.K."/>
            <person name="Weissman J.S."/>
        </authorList>
    </citation>
    <scope>LEVEL OF PROTEIN EXPRESSION [LARGE SCALE ANALYSIS]</scope>
</reference>
<reference key="8">
    <citation type="journal article" date="2007" name="Biochem. Biophys. Res. Commun.">
        <title>Cis1/Atg31 is required for autophagosome formation in Saccharomyces cerevisiae.</title>
        <authorList>
            <person name="Kabeya Y."/>
            <person name="Kawamata T."/>
            <person name="Suzuki K."/>
            <person name="Ohsumi Y."/>
        </authorList>
    </citation>
    <scope>FUNCTION</scope>
    <scope>SUBCELLULAR LOCATION</scope>
    <scope>INTERACTION WITH ATG17</scope>
</reference>
<reference key="9">
    <citation type="journal article" date="2008" name="Mol. Biol. Cell">
        <title>Organization of the pre-autophagosomal structure responsible for autophagosome formation.</title>
        <authorList>
            <person name="Kawamata T."/>
            <person name="Kamada Y."/>
            <person name="Kabeya Y."/>
            <person name="Sekito T."/>
            <person name="Ohsumi Y."/>
        </authorList>
    </citation>
    <scope>FUNCTION</scope>
    <scope>SUBCELLULAR LOCATION</scope>
    <scope>INTERACTION WITH ATG1</scope>
</reference>
<reference key="10">
    <citation type="journal article" date="2009" name="Autophagy">
        <title>A multiple ATG gene knockout strain for yeast two-hybrid analysis.</title>
        <authorList>
            <person name="Cao Y."/>
            <person name="Nair U."/>
            <person name="Yasumura-Yorimitsu K."/>
            <person name="Klionsky D.J."/>
        </authorList>
    </citation>
    <scope>INTERACTION WITH ATG17 AND ATG29</scope>
</reference>
<reference key="11">
    <citation type="journal article" date="2009" name="Biochem. Biophys. Res. Commun.">
        <title>Characterization of the Atg17-Atg29-Atg31 complex specifically required for starvation-induced autophagy in Saccharomyces cerevisiae.</title>
        <authorList>
            <person name="Kabeya Y."/>
            <person name="Noda N.N."/>
            <person name="Fujioka Y."/>
            <person name="Suzuki K."/>
            <person name="Inagaki F."/>
            <person name="Ohsumi Y."/>
        </authorList>
    </citation>
    <scope>FUNCTION</scope>
    <scope>IDENTIFICATION IN THE ATG17-ATG29-ATG31 COMPLEX</scope>
    <scope>INTERACTION WITH THE ATG1-ATG13 COMPLEX</scope>
    <scope>PHOSPHORYLATION</scope>
</reference>
<reference key="12">
    <citation type="journal article" date="2009" name="Mol. Biol. Cell">
        <title>A genomic screen for yeast mutants defective in selective mitochondria autophagy.</title>
        <authorList>
            <person name="Kanki T."/>
            <person name="Wang K."/>
            <person name="Baba M."/>
            <person name="Bartholomew C.R."/>
            <person name="Lynch-Day M.A."/>
            <person name="Du Z."/>
            <person name="Geng J."/>
            <person name="Mao K."/>
            <person name="Yang Z."/>
            <person name="Yen W.L."/>
            <person name="Klionsky D.J."/>
        </authorList>
    </citation>
    <scope>FUNCTION</scope>
</reference>
<reference key="13">
    <citation type="journal article" date="2015" name="Protein Cell">
        <title>Phosphorylation of Atg31 is required for autophagy.</title>
        <authorList>
            <person name="Feng W."/>
            <person name="Wu T."/>
            <person name="Dan X."/>
            <person name="Chen Y."/>
            <person name="Li L."/>
            <person name="Chen S."/>
            <person name="Miao D."/>
            <person name="Deng H."/>
            <person name="Gong X."/>
            <person name="Yu L."/>
        </authorList>
    </citation>
    <scope>FUNCTION</scope>
    <scope>DISRUPTION PHENOTYPE</scope>
    <scope>PHOSPHORYLATION AT SER-38; SER-40; THR-41; SER-44; SER-116; SER-135; SER-143; SER-146; SER-153; SER-174 AND SER-195</scope>
    <scope>MUTAGENESIS OF SER-174</scope>
</reference>
<accession>Q12421</accession>
<accession>D6VS08</accession>
<accession>Q03939</accession>
<protein>
    <recommendedName>
        <fullName>Autophagy-related protein 31</fullName>
    </recommendedName>
    <alternativeName>
        <fullName>CIK1 suppressor protein 1</fullName>
    </alternativeName>
    <alternativeName>
        <fullName>Protein CIS1</fullName>
    </alternativeName>
</protein>
<sequence length="196" mass="22191">MNVTVTVYDKNVKYRLEENIKNNKGPSNDDQPAYNNESKSTDGSDYAMFPTNIKYIFEDNNDELVDSSDAALTAGIDKVGDELENVIIVQLDESGSLEDITLISDQYELLSHRTNSLSLEENQMRTLSSHGDDKSNDEEEELSVDSDRFRVDSDIELDVISQFCDLSPFLRDLSLNDLIKLYVTQNEQLQMLSNSV</sequence>
<organism>
    <name type="scientific">Saccharomyces cerevisiae (strain ATCC 204508 / S288c)</name>
    <name type="common">Baker's yeast</name>
    <dbReference type="NCBI Taxonomy" id="559292"/>
    <lineage>
        <taxon>Eukaryota</taxon>
        <taxon>Fungi</taxon>
        <taxon>Dikarya</taxon>
        <taxon>Ascomycota</taxon>
        <taxon>Saccharomycotina</taxon>
        <taxon>Saccharomycetes</taxon>
        <taxon>Saccharomycetales</taxon>
        <taxon>Saccharomycetaceae</taxon>
        <taxon>Saccharomyces</taxon>
    </lineage>
</organism>
<keyword id="KW-0072">Autophagy</keyword>
<keyword id="KW-0159">Chromosome partition</keyword>
<keyword id="KW-0963">Cytoplasm</keyword>
<keyword id="KW-0206">Cytoskeleton</keyword>
<keyword id="KW-0415">Karyogamy</keyword>
<keyword id="KW-0493">Microtubule</keyword>
<keyword id="KW-0597">Phosphoprotein</keyword>
<keyword id="KW-0653">Protein transport</keyword>
<keyword id="KW-1185">Reference proteome</keyword>
<keyword id="KW-0813">Transport</keyword>
<gene>
    <name type="primary">ATG31</name>
    <name type="synonym">CIS1</name>
    <name type="ordered locus">YDR022C</name>
    <name type="ORF">PZD196</name>
    <name type="ORF">YD9335.08c</name>
</gene>
<dbReference type="EMBL" id="X95966">
    <property type="protein sequence ID" value="CAA65214.1"/>
    <property type="molecule type" value="Genomic_DNA"/>
</dbReference>
<dbReference type="EMBL" id="Z74318">
    <property type="protein sequence ID" value="CAA98843.1"/>
    <property type="molecule type" value="Genomic_DNA"/>
</dbReference>
<dbReference type="EMBL" id="Z49770">
    <property type="protein sequence ID" value="CAA89847.1"/>
    <property type="molecule type" value="Genomic_DNA"/>
</dbReference>
<dbReference type="EMBL" id="AY557645">
    <property type="protein sequence ID" value="AAS55971.1"/>
    <property type="molecule type" value="Genomic_DNA"/>
</dbReference>
<dbReference type="EMBL" id="BK006938">
    <property type="protein sequence ID" value="DAA11868.1"/>
    <property type="molecule type" value="Genomic_DNA"/>
</dbReference>
<dbReference type="PIR" id="S63429">
    <property type="entry name" value="S63429"/>
</dbReference>
<dbReference type="RefSeq" id="NP_010305.1">
    <property type="nucleotide sequence ID" value="NM_001180330.1"/>
</dbReference>
<dbReference type="SMR" id="Q12421"/>
<dbReference type="BioGRID" id="32072">
    <property type="interactions" value="66"/>
</dbReference>
<dbReference type="ComplexPortal" id="CPX-1676">
    <property type="entry name" value="ATG1/ULK1 protein kinase complex"/>
</dbReference>
<dbReference type="ComplexPortal" id="CPX-397">
    <property type="entry name" value="Atg17-Atg31-Atg29 complex"/>
</dbReference>
<dbReference type="DIP" id="DIP-2667N"/>
<dbReference type="FunCoup" id="Q12421">
    <property type="interactions" value="161"/>
</dbReference>
<dbReference type="IntAct" id="Q12421">
    <property type="interactions" value="9"/>
</dbReference>
<dbReference type="MINT" id="Q12421"/>
<dbReference type="STRING" id="4932.YDR022C"/>
<dbReference type="iPTMnet" id="Q12421"/>
<dbReference type="PaxDb" id="4932-YDR022C"/>
<dbReference type="PeptideAtlas" id="Q12421"/>
<dbReference type="EnsemblFungi" id="YDR022C_mRNA">
    <property type="protein sequence ID" value="YDR022C"/>
    <property type="gene ID" value="YDR022C"/>
</dbReference>
<dbReference type="GeneID" id="851585"/>
<dbReference type="KEGG" id="sce:YDR022C"/>
<dbReference type="AGR" id="SGD:S000002429"/>
<dbReference type="SGD" id="S000002429">
    <property type="gene designation" value="ATG31"/>
</dbReference>
<dbReference type="VEuPathDB" id="FungiDB:YDR022C"/>
<dbReference type="eggNOG" id="ENOG502SA9V">
    <property type="taxonomic scope" value="Eukaryota"/>
</dbReference>
<dbReference type="HOGENOM" id="CLU_138108_0_0_1"/>
<dbReference type="InParanoid" id="Q12421"/>
<dbReference type="OMA" id="QIETICN"/>
<dbReference type="OrthoDB" id="4065598at2759"/>
<dbReference type="BioCyc" id="YEAST:G3O-29639-MONOMER"/>
<dbReference type="BioGRID-ORCS" id="851585">
    <property type="hits" value="6 hits in 10 CRISPR screens"/>
</dbReference>
<dbReference type="CD-CODE" id="4F15E4D1">
    <property type="entry name" value="ATG condensate"/>
</dbReference>
<dbReference type="PRO" id="PR:Q12421"/>
<dbReference type="Proteomes" id="UP000002311">
    <property type="component" value="Chromosome IV"/>
</dbReference>
<dbReference type="RNAct" id="Q12421">
    <property type="molecule type" value="protein"/>
</dbReference>
<dbReference type="GO" id="GO:1990316">
    <property type="term" value="C:Atg1/ULK1 kinase complex"/>
    <property type="evidence" value="ECO:0000314"/>
    <property type="project" value="SGD"/>
</dbReference>
<dbReference type="GO" id="GO:0005737">
    <property type="term" value="C:cytoplasm"/>
    <property type="evidence" value="ECO:0000314"/>
    <property type="project" value="ComplexPortal"/>
</dbReference>
<dbReference type="GO" id="GO:0005829">
    <property type="term" value="C:cytosol"/>
    <property type="evidence" value="ECO:0007005"/>
    <property type="project" value="SGD"/>
</dbReference>
<dbReference type="GO" id="GO:0005874">
    <property type="term" value="C:microtubule"/>
    <property type="evidence" value="ECO:0007669"/>
    <property type="project" value="UniProtKB-KW"/>
</dbReference>
<dbReference type="GO" id="GO:0000407">
    <property type="term" value="C:phagophore assembly site"/>
    <property type="evidence" value="ECO:0000314"/>
    <property type="project" value="SGD"/>
</dbReference>
<dbReference type="GO" id="GO:0032991">
    <property type="term" value="C:protein-containing complex"/>
    <property type="evidence" value="ECO:0000353"/>
    <property type="project" value="ComplexPortal"/>
</dbReference>
<dbReference type="GO" id="GO:0000045">
    <property type="term" value="P:autophagosome assembly"/>
    <property type="evidence" value="ECO:0000303"/>
    <property type="project" value="ComplexPortal"/>
</dbReference>
<dbReference type="GO" id="GO:0006914">
    <property type="term" value="P:autophagy"/>
    <property type="evidence" value="ECO:0000314"/>
    <property type="project" value="ComplexPortal"/>
</dbReference>
<dbReference type="GO" id="GO:0000422">
    <property type="term" value="P:autophagy of mitochondrion"/>
    <property type="evidence" value="ECO:0000315"/>
    <property type="project" value="SGD"/>
</dbReference>
<dbReference type="GO" id="GO:0007059">
    <property type="term" value="P:chromosome segregation"/>
    <property type="evidence" value="ECO:0007669"/>
    <property type="project" value="UniProtKB-KW"/>
</dbReference>
<dbReference type="GO" id="GO:0000741">
    <property type="term" value="P:karyogamy"/>
    <property type="evidence" value="ECO:0007669"/>
    <property type="project" value="UniProtKB-KW"/>
</dbReference>
<dbReference type="GO" id="GO:0044804">
    <property type="term" value="P:nucleophagy"/>
    <property type="evidence" value="ECO:0000315"/>
    <property type="project" value="SGD"/>
</dbReference>
<dbReference type="GO" id="GO:0034727">
    <property type="term" value="P:piecemeal microautophagy of the nucleus"/>
    <property type="evidence" value="ECO:0000315"/>
    <property type="project" value="SGD"/>
</dbReference>
<dbReference type="GO" id="GO:0015031">
    <property type="term" value="P:protein transport"/>
    <property type="evidence" value="ECO:0007669"/>
    <property type="project" value="UniProtKB-KW"/>
</dbReference>
<dbReference type="GO" id="GO:0042594">
    <property type="term" value="P:response to starvation"/>
    <property type="evidence" value="ECO:0000303"/>
    <property type="project" value="ComplexPortal"/>
</dbReference>
<dbReference type="Gene3D" id="2.60.270.60">
    <property type="match status" value="1"/>
</dbReference>
<dbReference type="InterPro" id="IPR018621">
    <property type="entry name" value="Atg31"/>
</dbReference>
<dbReference type="Pfam" id="PF09795">
    <property type="entry name" value="ATG31"/>
    <property type="match status" value="1"/>
</dbReference>